<sequence length="362" mass="38951">MYQSSSSTSSSSQRSSLPGGGGLIRYGSAPGSFLNSVVDEVIGGGSSNARDFTGYQPSSDNFIGNFFTGAADSSSLRSDSTTCGVNNSSDGQKQLGNNNNNNSNKDIFLDRSYGGFNEISQQHKSNDIGGGNSSGSYSLARQRSSPADFFTYLASDKNNFSLNQPTSDYSPQGGSNGGRGHSRLKSQLSFTNHDSLARINEVNETPVHDGSGHSFSAASFGAATTDSWDDGSGSIGFTVTRPSKRSKDMDSGLFSQYSLPSDTSMNYMDNFMQLPEDSVPCKIRAKRGCATHPRSIAERERRTRISGKLKKLQDLVPNMDKQTSYSDMLDLAVQHIKGLQHQLQNLKKDQENCTCGCSEKPS</sequence>
<reference key="1">
    <citation type="journal article" date="2000" name="Nature">
        <title>Sequence and analysis of chromosome 1 of the plant Arabidopsis thaliana.</title>
        <authorList>
            <person name="Theologis A."/>
            <person name="Ecker J.R."/>
            <person name="Palm C.J."/>
            <person name="Federspiel N.A."/>
            <person name="Kaul S."/>
            <person name="White O."/>
            <person name="Alonso J."/>
            <person name="Altafi H."/>
            <person name="Araujo R."/>
            <person name="Bowman C.L."/>
            <person name="Brooks S.Y."/>
            <person name="Buehler E."/>
            <person name="Chan A."/>
            <person name="Chao Q."/>
            <person name="Chen H."/>
            <person name="Cheuk R.F."/>
            <person name="Chin C.W."/>
            <person name="Chung M.K."/>
            <person name="Conn L."/>
            <person name="Conway A.B."/>
            <person name="Conway A.R."/>
            <person name="Creasy T.H."/>
            <person name="Dewar K."/>
            <person name="Dunn P."/>
            <person name="Etgu P."/>
            <person name="Feldblyum T.V."/>
            <person name="Feng J.-D."/>
            <person name="Fong B."/>
            <person name="Fujii C.Y."/>
            <person name="Gill J.E."/>
            <person name="Goldsmith A.D."/>
            <person name="Haas B."/>
            <person name="Hansen N.F."/>
            <person name="Hughes B."/>
            <person name="Huizar L."/>
            <person name="Hunter J.L."/>
            <person name="Jenkins J."/>
            <person name="Johnson-Hopson C."/>
            <person name="Khan S."/>
            <person name="Khaykin E."/>
            <person name="Kim C.J."/>
            <person name="Koo H.L."/>
            <person name="Kremenetskaia I."/>
            <person name="Kurtz D.B."/>
            <person name="Kwan A."/>
            <person name="Lam B."/>
            <person name="Langin-Hooper S."/>
            <person name="Lee A."/>
            <person name="Lee J.M."/>
            <person name="Lenz C.A."/>
            <person name="Li J.H."/>
            <person name="Li Y.-P."/>
            <person name="Lin X."/>
            <person name="Liu S.X."/>
            <person name="Liu Z.A."/>
            <person name="Luros J.S."/>
            <person name="Maiti R."/>
            <person name="Marziali A."/>
            <person name="Militscher J."/>
            <person name="Miranda M."/>
            <person name="Nguyen M."/>
            <person name="Nierman W.C."/>
            <person name="Osborne B.I."/>
            <person name="Pai G."/>
            <person name="Peterson J."/>
            <person name="Pham P.K."/>
            <person name="Rizzo M."/>
            <person name="Rooney T."/>
            <person name="Rowley D."/>
            <person name="Sakano H."/>
            <person name="Salzberg S.L."/>
            <person name="Schwartz J.R."/>
            <person name="Shinn P."/>
            <person name="Southwick A.M."/>
            <person name="Sun H."/>
            <person name="Tallon L.J."/>
            <person name="Tambunga G."/>
            <person name="Toriumi M.J."/>
            <person name="Town C.D."/>
            <person name="Utterback T."/>
            <person name="Van Aken S."/>
            <person name="Vaysberg M."/>
            <person name="Vysotskaia V.S."/>
            <person name="Walker M."/>
            <person name="Wu D."/>
            <person name="Yu G."/>
            <person name="Fraser C.M."/>
            <person name="Venter J.C."/>
            <person name="Davis R.W."/>
        </authorList>
    </citation>
    <scope>NUCLEOTIDE SEQUENCE [LARGE SCALE GENOMIC DNA]</scope>
    <source>
        <strain>cv. Columbia</strain>
    </source>
</reference>
<reference key="2">
    <citation type="journal article" date="2017" name="Plant J.">
        <title>Araport11: a complete reannotation of the Arabidopsis thaliana reference genome.</title>
        <authorList>
            <person name="Cheng C.Y."/>
            <person name="Krishnakumar V."/>
            <person name="Chan A.P."/>
            <person name="Thibaud-Nissen F."/>
            <person name="Schobel S."/>
            <person name="Town C.D."/>
        </authorList>
    </citation>
    <scope>GENOME REANNOTATION</scope>
    <source>
        <strain>cv. Columbia</strain>
    </source>
</reference>
<reference key="3">
    <citation type="journal article" date="2003" name="Science">
        <title>Empirical analysis of transcriptional activity in the Arabidopsis genome.</title>
        <authorList>
            <person name="Yamada K."/>
            <person name="Lim J."/>
            <person name="Dale J.M."/>
            <person name="Chen H."/>
            <person name="Shinn P."/>
            <person name="Palm C.J."/>
            <person name="Southwick A.M."/>
            <person name="Wu H.C."/>
            <person name="Kim C.J."/>
            <person name="Nguyen M."/>
            <person name="Pham P.K."/>
            <person name="Cheuk R.F."/>
            <person name="Karlin-Newmann G."/>
            <person name="Liu S.X."/>
            <person name="Lam B."/>
            <person name="Sakano H."/>
            <person name="Wu T."/>
            <person name="Yu G."/>
            <person name="Miranda M."/>
            <person name="Quach H.L."/>
            <person name="Tripp M."/>
            <person name="Chang C.H."/>
            <person name="Lee J.M."/>
            <person name="Toriumi M.J."/>
            <person name="Chan M.M."/>
            <person name="Tang C.C."/>
            <person name="Onodera C.S."/>
            <person name="Deng J.M."/>
            <person name="Akiyama K."/>
            <person name="Ansari Y."/>
            <person name="Arakawa T."/>
            <person name="Banh J."/>
            <person name="Banno F."/>
            <person name="Bowser L."/>
            <person name="Brooks S.Y."/>
            <person name="Carninci P."/>
            <person name="Chao Q."/>
            <person name="Choy N."/>
            <person name="Enju A."/>
            <person name="Goldsmith A.D."/>
            <person name="Gurjal M."/>
            <person name="Hansen N.F."/>
            <person name="Hayashizaki Y."/>
            <person name="Johnson-Hopson C."/>
            <person name="Hsuan V.W."/>
            <person name="Iida K."/>
            <person name="Karnes M."/>
            <person name="Khan S."/>
            <person name="Koesema E."/>
            <person name="Ishida J."/>
            <person name="Jiang P.X."/>
            <person name="Jones T."/>
            <person name="Kawai J."/>
            <person name="Kamiya A."/>
            <person name="Meyers C."/>
            <person name="Nakajima M."/>
            <person name="Narusaka M."/>
            <person name="Seki M."/>
            <person name="Sakurai T."/>
            <person name="Satou M."/>
            <person name="Tamse R."/>
            <person name="Vaysberg M."/>
            <person name="Wallender E.K."/>
            <person name="Wong C."/>
            <person name="Yamamura Y."/>
            <person name="Yuan S."/>
            <person name="Shinozaki K."/>
            <person name="Davis R.W."/>
            <person name="Theologis A."/>
            <person name="Ecker J.R."/>
        </authorList>
    </citation>
    <scope>NUCLEOTIDE SEQUENCE [LARGE SCALE MRNA]</scope>
    <source>
        <strain>cv. Columbia</strain>
    </source>
</reference>
<reference key="4">
    <citation type="submission" date="2002-03" db="EMBL/GenBank/DDBJ databases">
        <title>Full-length cDNA from Arabidopsis thaliana.</title>
        <authorList>
            <person name="Brover V.V."/>
            <person name="Troukhan M.E."/>
            <person name="Alexandrov N.A."/>
            <person name="Lu Y.-P."/>
            <person name="Flavell R.B."/>
            <person name="Feldmann K.A."/>
        </authorList>
    </citation>
    <scope>NUCLEOTIDE SEQUENCE [LARGE SCALE MRNA]</scope>
</reference>
<reference key="5">
    <citation type="journal article" date="2003" name="Mol. Biol. Evol.">
        <title>The basic helix-loop-helix transcription factor family in plants: a genome-wide study of protein structure and functional diversity.</title>
        <authorList>
            <person name="Heim M.A."/>
            <person name="Jakoby M."/>
            <person name="Werber M."/>
            <person name="Martin C."/>
            <person name="Weisshaar B."/>
            <person name="Bailey P.C."/>
        </authorList>
    </citation>
    <scope>GENE FAMILY</scope>
    <scope>NOMENCLATURE</scope>
</reference>
<reference key="6">
    <citation type="journal article" date="2003" name="Plant Cell">
        <title>The Arabidopsis basic/helix-loop-helix transcription factor family.</title>
        <authorList>
            <person name="Toledo-Ortiz G."/>
            <person name="Huq E."/>
            <person name="Quail P.H."/>
        </authorList>
    </citation>
    <scope>GENE FAMILY</scope>
</reference>
<reference key="7">
    <citation type="journal article" date="2003" name="Plant Cell">
        <title>Update on the basic helix-loop-helix transcription factor gene family in Arabidopsis thaliana.</title>
        <authorList>
            <person name="Bailey P.C."/>
            <person name="Martin C."/>
            <person name="Toledo-Ortiz G."/>
            <person name="Quail P.H."/>
            <person name="Huq E."/>
            <person name="Heim M.A."/>
            <person name="Jakoby M."/>
            <person name="Werber M."/>
            <person name="Weisshaar B."/>
        </authorList>
    </citation>
    <scope>GENE FAMILY</scope>
    <scope>NOMENCLATURE</scope>
</reference>
<reference key="8">
    <citation type="journal article" date="2008" name="J. Proteome Res.">
        <title>Site-specific phosphorylation profiling of Arabidopsis proteins by mass spectrometry and peptide chip analysis.</title>
        <authorList>
            <person name="de la Fuente van Bentem S."/>
            <person name="Anrather D."/>
            <person name="Dohnal I."/>
            <person name="Roitinger E."/>
            <person name="Csaszar E."/>
            <person name="Joore J."/>
            <person name="Buijnink J."/>
            <person name="Carreri A."/>
            <person name="Forzani C."/>
            <person name="Lorkovic Z.J."/>
            <person name="Barta A."/>
            <person name="Lecourieux D."/>
            <person name="Verhounig A."/>
            <person name="Jonak C."/>
            <person name="Hirt H."/>
        </authorList>
    </citation>
    <scope>IDENTIFICATION BY MASS SPECTROMETRY [LARGE SCALE ANALYSIS]</scope>
    <source>
        <tissue>Root</tissue>
    </source>
</reference>
<reference key="9">
    <citation type="journal article" date="2009" name="Plant Physiol.">
        <title>Large-scale Arabidopsis phosphoproteome profiling reveals novel chloroplast kinase substrates and phosphorylation networks.</title>
        <authorList>
            <person name="Reiland S."/>
            <person name="Messerli G."/>
            <person name="Baerenfaller K."/>
            <person name="Gerrits B."/>
            <person name="Endler A."/>
            <person name="Grossmann J."/>
            <person name="Gruissem W."/>
            <person name="Baginsky S."/>
        </authorList>
    </citation>
    <scope>PHOSPHORYLATION [LARGE SCALE ANALYSIS] AT SER-189</scope>
    <scope>IDENTIFICATION BY MASS SPECTROMETRY [LARGE SCALE ANALYSIS]</scope>
</reference>
<feature type="chain" id="PRO_0000358812" description="Transcription factor bHLH128">
    <location>
        <begin position="1"/>
        <end position="362"/>
    </location>
</feature>
<feature type="domain" description="bHLH" evidence="1">
    <location>
        <begin position="289"/>
        <end position="339"/>
    </location>
</feature>
<feature type="region of interest" description="Disordered" evidence="2">
    <location>
        <begin position="1"/>
        <end position="23"/>
    </location>
</feature>
<feature type="region of interest" description="Disordered" evidence="2">
    <location>
        <begin position="78"/>
        <end position="106"/>
    </location>
</feature>
<feature type="region of interest" description="Disordered" evidence="2">
    <location>
        <begin position="120"/>
        <end position="140"/>
    </location>
</feature>
<feature type="region of interest" description="Disordered" evidence="2">
    <location>
        <begin position="162"/>
        <end position="184"/>
    </location>
</feature>
<feature type="compositionally biased region" description="Low complexity" evidence="2">
    <location>
        <begin position="1"/>
        <end position="16"/>
    </location>
</feature>
<feature type="compositionally biased region" description="Polar residues" evidence="2">
    <location>
        <begin position="78"/>
        <end position="96"/>
    </location>
</feature>
<feature type="compositionally biased region" description="Polar residues" evidence="2">
    <location>
        <begin position="162"/>
        <end position="173"/>
    </location>
</feature>
<feature type="modified residue" description="Phosphoserine" evidence="4">
    <location>
        <position position="189"/>
    </location>
</feature>
<feature type="sequence conflict" description="In Ref. 4; AAM63313." evidence="3" ref="4">
    <original>Q</original>
    <variation>H</variation>
    <location>
        <position position="92"/>
    </location>
</feature>
<organism>
    <name type="scientific">Arabidopsis thaliana</name>
    <name type="common">Mouse-ear cress</name>
    <dbReference type="NCBI Taxonomy" id="3702"/>
    <lineage>
        <taxon>Eukaryota</taxon>
        <taxon>Viridiplantae</taxon>
        <taxon>Streptophyta</taxon>
        <taxon>Embryophyta</taxon>
        <taxon>Tracheophyta</taxon>
        <taxon>Spermatophyta</taxon>
        <taxon>Magnoliopsida</taxon>
        <taxon>eudicotyledons</taxon>
        <taxon>Gunneridae</taxon>
        <taxon>Pentapetalae</taxon>
        <taxon>rosids</taxon>
        <taxon>malvids</taxon>
        <taxon>Brassicales</taxon>
        <taxon>Brassicaceae</taxon>
        <taxon>Camelineae</taxon>
        <taxon>Arabidopsis</taxon>
    </lineage>
</organism>
<comment type="subunit">
    <text evidence="3">Homodimer.</text>
</comment>
<comment type="interaction">
    <interactant intactId="EBI-3387023">
        <id>Q8H102</id>
    </interactant>
    <interactant intactId="EBI-3387563">
        <id>O48847</id>
        <label>LUH</label>
    </interactant>
    <organismsDiffer>false</organismsDiffer>
    <experiments>4</experiments>
</comment>
<comment type="subcellular location">
    <subcellularLocation>
        <location evidence="1">Nucleus</location>
    </subcellularLocation>
</comment>
<comment type="sequence caution" evidence="3">
    <conflict type="erroneous gene model prediction">
        <sequence resource="EMBL-CDS" id="AAF29386"/>
    </conflict>
</comment>
<accession>Q8H102</accession>
<accession>Q8LDA7</accession>
<accession>Q9MA45</accession>
<dbReference type="EMBL" id="AC009999">
    <property type="protein sequence ID" value="AAF29386.1"/>
    <property type="status" value="ALT_SEQ"/>
    <property type="molecule type" value="Genomic_DNA"/>
</dbReference>
<dbReference type="EMBL" id="CP002684">
    <property type="protein sequence ID" value="AEE27896.1"/>
    <property type="molecule type" value="Genomic_DNA"/>
</dbReference>
<dbReference type="EMBL" id="BT000954">
    <property type="protein sequence ID" value="AAN41354.1"/>
    <property type="molecule type" value="mRNA"/>
</dbReference>
<dbReference type="EMBL" id="AY086106">
    <property type="protein sequence ID" value="AAM63313.1"/>
    <property type="molecule type" value="mRNA"/>
</dbReference>
<dbReference type="PIR" id="F86192">
    <property type="entry name" value="F86192"/>
</dbReference>
<dbReference type="RefSeq" id="NP_563749.1">
    <property type="nucleotide sequence ID" value="NM_100461.6"/>
</dbReference>
<dbReference type="SMR" id="Q8H102"/>
<dbReference type="BioGRID" id="22332">
    <property type="interactions" value="14"/>
</dbReference>
<dbReference type="FunCoup" id="Q8H102">
    <property type="interactions" value="550"/>
</dbReference>
<dbReference type="IntAct" id="Q8H102">
    <property type="interactions" value="13"/>
</dbReference>
<dbReference type="STRING" id="3702.Q8H102"/>
<dbReference type="iPTMnet" id="Q8H102"/>
<dbReference type="PaxDb" id="3702-AT1G05805.1"/>
<dbReference type="ProteomicsDB" id="240792"/>
<dbReference type="EnsemblPlants" id="AT1G05805.1">
    <property type="protein sequence ID" value="AT1G05805.1"/>
    <property type="gene ID" value="AT1G05805"/>
</dbReference>
<dbReference type="GeneID" id="837090"/>
<dbReference type="Gramene" id="AT1G05805.1">
    <property type="protein sequence ID" value="AT1G05805.1"/>
    <property type="gene ID" value="AT1G05805"/>
</dbReference>
<dbReference type="KEGG" id="ath:AT1G05805"/>
<dbReference type="Araport" id="AT1G05805"/>
<dbReference type="TAIR" id="AT1G05805">
    <property type="gene designation" value="AKS2"/>
</dbReference>
<dbReference type="eggNOG" id="ENOG502QVKF">
    <property type="taxonomic scope" value="Eukaryota"/>
</dbReference>
<dbReference type="HOGENOM" id="CLU_042981_0_1_1"/>
<dbReference type="InParanoid" id="Q8H102"/>
<dbReference type="OMA" id="HCTCGCK"/>
<dbReference type="PhylomeDB" id="Q8H102"/>
<dbReference type="PRO" id="PR:Q8H102"/>
<dbReference type="Proteomes" id="UP000006548">
    <property type="component" value="Chromosome 1"/>
</dbReference>
<dbReference type="ExpressionAtlas" id="Q8H102">
    <property type="expression patterns" value="baseline and differential"/>
</dbReference>
<dbReference type="GO" id="GO:0005634">
    <property type="term" value="C:nucleus"/>
    <property type="evidence" value="ECO:0007669"/>
    <property type="project" value="UniProtKB-SubCell"/>
</dbReference>
<dbReference type="GO" id="GO:0003700">
    <property type="term" value="F:DNA-binding transcription factor activity"/>
    <property type="evidence" value="ECO:0000250"/>
    <property type="project" value="TAIR"/>
</dbReference>
<dbReference type="GO" id="GO:0046983">
    <property type="term" value="F:protein dimerization activity"/>
    <property type="evidence" value="ECO:0007669"/>
    <property type="project" value="InterPro"/>
</dbReference>
<dbReference type="GO" id="GO:0000976">
    <property type="term" value="F:transcription cis-regulatory region binding"/>
    <property type="evidence" value="ECO:0000353"/>
    <property type="project" value="TAIR"/>
</dbReference>
<dbReference type="GO" id="GO:0006355">
    <property type="term" value="P:regulation of DNA-templated transcription"/>
    <property type="evidence" value="ECO:0000304"/>
    <property type="project" value="TAIR"/>
</dbReference>
<dbReference type="GO" id="GO:1903286">
    <property type="term" value="P:regulation of potassium ion import"/>
    <property type="evidence" value="ECO:0000315"/>
    <property type="project" value="UniProtKB"/>
</dbReference>
<dbReference type="GO" id="GO:0010119">
    <property type="term" value="P:regulation of stomatal movement"/>
    <property type="evidence" value="ECO:0000314"/>
    <property type="project" value="TAIR"/>
</dbReference>
<dbReference type="GO" id="GO:1902456">
    <property type="term" value="P:regulation of stomatal opening"/>
    <property type="evidence" value="ECO:0000315"/>
    <property type="project" value="UniProtKB"/>
</dbReference>
<dbReference type="GO" id="GO:0009416">
    <property type="term" value="P:response to light stimulus"/>
    <property type="evidence" value="ECO:0000315"/>
    <property type="project" value="UniProtKB"/>
</dbReference>
<dbReference type="CDD" id="cd11393">
    <property type="entry name" value="bHLH_AtbHLH_like"/>
    <property type="match status" value="1"/>
</dbReference>
<dbReference type="FunFam" id="4.10.280.10:FF:000021">
    <property type="entry name" value="Transcription factor bHLH130 family"/>
    <property type="match status" value="1"/>
</dbReference>
<dbReference type="Gene3D" id="4.10.280.10">
    <property type="entry name" value="Helix-loop-helix DNA-binding domain"/>
    <property type="match status" value="1"/>
</dbReference>
<dbReference type="InterPro" id="IPR045239">
    <property type="entry name" value="bHLH95_bHLH"/>
</dbReference>
<dbReference type="InterPro" id="IPR011598">
    <property type="entry name" value="bHLH_dom"/>
</dbReference>
<dbReference type="InterPro" id="IPR036638">
    <property type="entry name" value="HLH_DNA-bd_sf"/>
</dbReference>
<dbReference type="InterPro" id="IPR045843">
    <property type="entry name" value="IND-like"/>
</dbReference>
<dbReference type="PANTHER" id="PTHR16223:SF151">
    <property type="entry name" value="TRANSCRIPTION FACTOR BHLH128"/>
    <property type="match status" value="1"/>
</dbReference>
<dbReference type="PANTHER" id="PTHR16223">
    <property type="entry name" value="TRANSCRIPTION FACTOR BHLH83-RELATED"/>
    <property type="match status" value="1"/>
</dbReference>
<dbReference type="Pfam" id="PF00010">
    <property type="entry name" value="HLH"/>
    <property type="match status" value="1"/>
</dbReference>
<dbReference type="SMART" id="SM00353">
    <property type="entry name" value="HLH"/>
    <property type="match status" value="1"/>
</dbReference>
<dbReference type="SUPFAM" id="SSF47459">
    <property type="entry name" value="HLH, helix-loop-helix DNA-binding domain"/>
    <property type="match status" value="1"/>
</dbReference>
<dbReference type="PROSITE" id="PS50888">
    <property type="entry name" value="BHLH"/>
    <property type="match status" value="1"/>
</dbReference>
<evidence type="ECO:0000255" key="1">
    <source>
        <dbReference type="PROSITE-ProRule" id="PRU00981"/>
    </source>
</evidence>
<evidence type="ECO:0000256" key="2">
    <source>
        <dbReference type="SAM" id="MobiDB-lite"/>
    </source>
</evidence>
<evidence type="ECO:0000305" key="3"/>
<evidence type="ECO:0007744" key="4">
    <source>
    </source>
</evidence>
<keyword id="KW-0238">DNA-binding</keyword>
<keyword id="KW-0539">Nucleus</keyword>
<keyword id="KW-0597">Phosphoprotein</keyword>
<keyword id="KW-1185">Reference proteome</keyword>
<keyword id="KW-0804">Transcription</keyword>
<keyword id="KW-0805">Transcription regulation</keyword>
<protein>
    <recommendedName>
        <fullName>Transcription factor bHLH128</fullName>
    </recommendedName>
    <alternativeName>
        <fullName>Basic helix-loop-helix protein 128</fullName>
        <shortName>AtbHLH128</shortName>
        <shortName>bHLH 128</shortName>
    </alternativeName>
    <alternativeName>
        <fullName>Transcription factor EN 74</fullName>
    </alternativeName>
    <alternativeName>
        <fullName>bHLH transcription factor bHLH128</fullName>
    </alternativeName>
</protein>
<proteinExistence type="evidence at protein level"/>
<name>BH128_ARATH</name>
<gene>
    <name type="primary">BHLH128</name>
    <name type="synonym">EN74</name>
    <name type="ordered locus">At1g05805</name>
    <name type="ORF">T20M3.7</name>
</gene>